<feature type="chain" id="PRO_0000058872" description="Major serine/threonine-protein phosphatase PP2A-2 catalytic subunit">
    <location>
        <begin position="1"/>
        <end position="322"/>
    </location>
</feature>
<feature type="active site" description="Proton donor" evidence="1">
    <location>
        <position position="131"/>
    </location>
</feature>
<feature type="binding site" evidence="1">
    <location>
        <position position="70"/>
    </location>
    <ligand>
        <name>Mn(2+)</name>
        <dbReference type="ChEBI" id="CHEBI:29035"/>
        <label>1</label>
    </ligand>
</feature>
<feature type="binding site" evidence="1">
    <location>
        <position position="72"/>
    </location>
    <ligand>
        <name>Mn(2+)</name>
        <dbReference type="ChEBI" id="CHEBI:29035"/>
        <label>1</label>
    </ligand>
</feature>
<feature type="binding site" evidence="1">
    <location>
        <position position="98"/>
    </location>
    <ligand>
        <name>Mn(2+)</name>
        <dbReference type="ChEBI" id="CHEBI:29035"/>
        <label>1</label>
    </ligand>
</feature>
<feature type="binding site" evidence="1">
    <location>
        <position position="98"/>
    </location>
    <ligand>
        <name>Mn(2+)</name>
        <dbReference type="ChEBI" id="CHEBI:29035"/>
        <label>2</label>
    </ligand>
</feature>
<feature type="binding site" evidence="1">
    <location>
        <position position="130"/>
    </location>
    <ligand>
        <name>Mn(2+)</name>
        <dbReference type="ChEBI" id="CHEBI:29035"/>
        <label>2</label>
    </ligand>
</feature>
<feature type="binding site" evidence="1">
    <location>
        <position position="180"/>
    </location>
    <ligand>
        <name>Mn(2+)</name>
        <dbReference type="ChEBI" id="CHEBI:29035"/>
        <label>2</label>
    </ligand>
</feature>
<feature type="binding site" evidence="1">
    <location>
        <position position="254"/>
    </location>
    <ligand>
        <name>Mn(2+)</name>
        <dbReference type="ChEBI" id="CHEBI:29035"/>
        <label>2</label>
    </ligand>
</feature>
<feature type="modified residue" description="Leucine methyl ester" evidence="1">
    <location>
        <position position="322"/>
    </location>
</feature>
<gene>
    <name type="primary">ppa2</name>
    <name type="ORF">SPBC16H5.07c</name>
</gene>
<name>PP2A2_SCHPO</name>
<keyword id="KW-0131">Cell cycle</keyword>
<keyword id="KW-0132">Cell division</keyword>
<keyword id="KW-0378">Hydrolase</keyword>
<keyword id="KW-0464">Manganese</keyword>
<keyword id="KW-0479">Metal-binding</keyword>
<keyword id="KW-0488">Methylation</keyword>
<keyword id="KW-0498">Mitosis</keyword>
<keyword id="KW-0904">Protein phosphatase</keyword>
<keyword id="KW-1185">Reference proteome</keyword>
<evidence type="ECO:0000250" key="1"/>
<evidence type="ECO:0000305" key="2"/>
<sequence length="322" mass="36489">MSIDPANDSKLAPEANDATLGDVDRWIEQLKKCEPLSEADVEMLCDKAREVLCQENNVQPVRNPVTVCGDIHGQFHDLMELFKIGGDVPDMNYLFMGDYVDRGYHSVETVSLLVAMKLRYPNRITILRGNHESRQITQVYGFYDECLRKYGSANVWKHFTNLFDYFPLTALIEDRIFCLHGGLSPSIDSLDHVRTLDRVQEVPHEGPMCDLLWSDPDDRCGWGISPRGAGYTFGQDISETFNHANGLSLTARAHQLVMEGFNWAHDGDVVTIFSAPNYCYRCGNQAAILEVDDTMNQVFLQFDPAPREGEPVIARRTPDYFL</sequence>
<protein>
    <recommendedName>
        <fullName>Major serine/threonine-protein phosphatase PP2A-2 catalytic subunit</fullName>
        <ecNumber>3.1.3.16</ecNumber>
    </recommendedName>
</protein>
<organism>
    <name type="scientific">Schizosaccharomyces pombe (strain 972 / ATCC 24843)</name>
    <name type="common">Fission yeast</name>
    <dbReference type="NCBI Taxonomy" id="284812"/>
    <lineage>
        <taxon>Eukaryota</taxon>
        <taxon>Fungi</taxon>
        <taxon>Dikarya</taxon>
        <taxon>Ascomycota</taxon>
        <taxon>Taphrinomycotina</taxon>
        <taxon>Schizosaccharomycetes</taxon>
        <taxon>Schizosaccharomycetales</taxon>
        <taxon>Schizosaccharomycetaceae</taxon>
        <taxon>Schizosaccharomyces</taxon>
    </lineage>
</organism>
<comment type="function">
    <text>Essential role in cell cycle control. PP2A may be involved in controlling the entry into mitosis, possibly acting as an inhibitor.</text>
</comment>
<comment type="catalytic activity">
    <reaction>
        <text>O-phospho-L-seryl-[protein] + H2O = L-seryl-[protein] + phosphate</text>
        <dbReference type="Rhea" id="RHEA:20629"/>
        <dbReference type="Rhea" id="RHEA-COMP:9863"/>
        <dbReference type="Rhea" id="RHEA-COMP:11604"/>
        <dbReference type="ChEBI" id="CHEBI:15377"/>
        <dbReference type="ChEBI" id="CHEBI:29999"/>
        <dbReference type="ChEBI" id="CHEBI:43474"/>
        <dbReference type="ChEBI" id="CHEBI:83421"/>
        <dbReference type="EC" id="3.1.3.16"/>
    </reaction>
</comment>
<comment type="catalytic activity">
    <reaction>
        <text>O-phospho-L-threonyl-[protein] + H2O = L-threonyl-[protein] + phosphate</text>
        <dbReference type="Rhea" id="RHEA:47004"/>
        <dbReference type="Rhea" id="RHEA-COMP:11060"/>
        <dbReference type="Rhea" id="RHEA-COMP:11605"/>
        <dbReference type="ChEBI" id="CHEBI:15377"/>
        <dbReference type="ChEBI" id="CHEBI:30013"/>
        <dbReference type="ChEBI" id="CHEBI:43474"/>
        <dbReference type="ChEBI" id="CHEBI:61977"/>
        <dbReference type="EC" id="3.1.3.16"/>
    </reaction>
</comment>
<comment type="cofactor">
    <cofactor evidence="1">
        <name>Mn(2+)</name>
        <dbReference type="ChEBI" id="CHEBI:29035"/>
    </cofactor>
    <text evidence="1">Binds 2 manganese ions per subunit.</text>
</comment>
<comment type="miscellaneous">
    <text>Retarded cell growth is produced by disruption of ppa2.</text>
</comment>
<comment type="similarity">
    <text evidence="2">Belongs to the PPP phosphatase family. PP-2A subfamily.</text>
</comment>
<proteinExistence type="inferred from homology"/>
<reference key="1">
    <citation type="journal article" date="1990" name="Cell">
        <title>Distinct, essential roles of type 1 and 2A protein phosphatases in the control of the fission yeast cell division cycle.</title>
        <authorList>
            <person name="Kinoshita N."/>
            <person name="Ohkura H."/>
            <person name="Yanagida M."/>
        </authorList>
    </citation>
    <scope>NUCLEOTIDE SEQUENCE [GENOMIC DNA]</scope>
    <source>
        <strain>972 / HM123</strain>
    </source>
</reference>
<reference key="2">
    <citation type="journal article" date="1999" name="Yeast">
        <title>DNA sequencing and analysis of a 67.4 kb region from the right arm of Schizosaccharomyces pombe chromosome II reveals 28 open reading frames including the genes his5, pol5, ppa2, rip1, rpb8 and skb1.</title>
        <authorList>
            <person name="Xiang Z."/>
            <person name="Lyne M.H."/>
            <person name="Wood V."/>
            <person name="Rajandream M.A."/>
            <person name="Barrell B.G."/>
            <person name="Aves S.J."/>
        </authorList>
    </citation>
    <scope>NUCLEOTIDE SEQUENCE [GENOMIC DNA]</scope>
</reference>
<reference key="3">
    <citation type="journal article" date="2002" name="Nature">
        <title>The genome sequence of Schizosaccharomyces pombe.</title>
        <authorList>
            <person name="Wood V."/>
            <person name="Gwilliam R."/>
            <person name="Rajandream M.A."/>
            <person name="Lyne M.H."/>
            <person name="Lyne R."/>
            <person name="Stewart A."/>
            <person name="Sgouros J.G."/>
            <person name="Peat N."/>
            <person name="Hayles J."/>
            <person name="Baker S.G."/>
            <person name="Basham D."/>
            <person name="Bowman S."/>
            <person name="Brooks K."/>
            <person name="Brown D."/>
            <person name="Brown S."/>
            <person name="Chillingworth T."/>
            <person name="Churcher C.M."/>
            <person name="Collins M."/>
            <person name="Connor R."/>
            <person name="Cronin A."/>
            <person name="Davis P."/>
            <person name="Feltwell T."/>
            <person name="Fraser A."/>
            <person name="Gentles S."/>
            <person name="Goble A."/>
            <person name="Hamlin N."/>
            <person name="Harris D.E."/>
            <person name="Hidalgo J."/>
            <person name="Hodgson G."/>
            <person name="Holroyd S."/>
            <person name="Hornsby T."/>
            <person name="Howarth S."/>
            <person name="Huckle E.J."/>
            <person name="Hunt S."/>
            <person name="Jagels K."/>
            <person name="James K.D."/>
            <person name="Jones L."/>
            <person name="Jones M."/>
            <person name="Leather S."/>
            <person name="McDonald S."/>
            <person name="McLean J."/>
            <person name="Mooney P."/>
            <person name="Moule S."/>
            <person name="Mungall K.L."/>
            <person name="Murphy L.D."/>
            <person name="Niblett D."/>
            <person name="Odell C."/>
            <person name="Oliver K."/>
            <person name="O'Neil S."/>
            <person name="Pearson D."/>
            <person name="Quail M.A."/>
            <person name="Rabbinowitsch E."/>
            <person name="Rutherford K.M."/>
            <person name="Rutter S."/>
            <person name="Saunders D."/>
            <person name="Seeger K."/>
            <person name="Sharp S."/>
            <person name="Skelton J."/>
            <person name="Simmonds M.N."/>
            <person name="Squares R."/>
            <person name="Squares S."/>
            <person name="Stevens K."/>
            <person name="Taylor K."/>
            <person name="Taylor R.G."/>
            <person name="Tivey A."/>
            <person name="Walsh S.V."/>
            <person name="Warren T."/>
            <person name="Whitehead S."/>
            <person name="Woodward J.R."/>
            <person name="Volckaert G."/>
            <person name="Aert R."/>
            <person name="Robben J."/>
            <person name="Grymonprez B."/>
            <person name="Weltjens I."/>
            <person name="Vanstreels E."/>
            <person name="Rieger M."/>
            <person name="Schaefer M."/>
            <person name="Mueller-Auer S."/>
            <person name="Gabel C."/>
            <person name="Fuchs M."/>
            <person name="Duesterhoeft A."/>
            <person name="Fritzc C."/>
            <person name="Holzer E."/>
            <person name="Moestl D."/>
            <person name="Hilbert H."/>
            <person name="Borzym K."/>
            <person name="Langer I."/>
            <person name="Beck A."/>
            <person name="Lehrach H."/>
            <person name="Reinhardt R."/>
            <person name="Pohl T.M."/>
            <person name="Eger P."/>
            <person name="Zimmermann W."/>
            <person name="Wedler H."/>
            <person name="Wambutt R."/>
            <person name="Purnelle B."/>
            <person name="Goffeau A."/>
            <person name="Cadieu E."/>
            <person name="Dreano S."/>
            <person name="Gloux S."/>
            <person name="Lelaure V."/>
            <person name="Mottier S."/>
            <person name="Galibert F."/>
            <person name="Aves S.J."/>
            <person name="Xiang Z."/>
            <person name="Hunt C."/>
            <person name="Moore K."/>
            <person name="Hurst S.M."/>
            <person name="Lucas M."/>
            <person name="Rochet M."/>
            <person name="Gaillardin C."/>
            <person name="Tallada V.A."/>
            <person name="Garzon A."/>
            <person name="Thode G."/>
            <person name="Daga R.R."/>
            <person name="Cruzado L."/>
            <person name="Jimenez J."/>
            <person name="Sanchez M."/>
            <person name="del Rey F."/>
            <person name="Benito J."/>
            <person name="Dominguez A."/>
            <person name="Revuelta J.L."/>
            <person name="Moreno S."/>
            <person name="Armstrong J."/>
            <person name="Forsburg S.L."/>
            <person name="Cerutti L."/>
            <person name="Lowe T."/>
            <person name="McCombie W.R."/>
            <person name="Paulsen I."/>
            <person name="Potashkin J."/>
            <person name="Shpakovski G.V."/>
            <person name="Ussery D."/>
            <person name="Barrell B.G."/>
            <person name="Nurse P."/>
        </authorList>
    </citation>
    <scope>NUCLEOTIDE SEQUENCE [LARGE SCALE GENOMIC DNA]</scope>
    <source>
        <strain>972 / ATCC 24843</strain>
    </source>
</reference>
<accession>P23636</accession>
<dbReference type="EC" id="3.1.3.16"/>
<dbReference type="EMBL" id="M58519">
    <property type="protein sequence ID" value="AAA63579.1"/>
    <property type="molecule type" value="Genomic_DNA"/>
</dbReference>
<dbReference type="EMBL" id="CU329671">
    <property type="protein sequence ID" value="CAA17905.1"/>
    <property type="molecule type" value="Genomic_DNA"/>
</dbReference>
<dbReference type="PIR" id="B36076">
    <property type="entry name" value="B36076"/>
</dbReference>
<dbReference type="RefSeq" id="NP_595940.1">
    <property type="nucleotide sequence ID" value="NM_001021848.2"/>
</dbReference>
<dbReference type="SMR" id="P23636"/>
<dbReference type="BioGRID" id="276610">
    <property type="interactions" value="113"/>
</dbReference>
<dbReference type="DIP" id="DIP-61477N"/>
<dbReference type="FunCoup" id="P23636">
    <property type="interactions" value="519"/>
</dbReference>
<dbReference type="IntAct" id="P23636">
    <property type="interactions" value="1"/>
</dbReference>
<dbReference type="STRING" id="284812.P23636"/>
<dbReference type="iPTMnet" id="P23636"/>
<dbReference type="PaxDb" id="4896-SPBC16H5.07c.1"/>
<dbReference type="EnsemblFungi" id="SPBC16H5.07c.1">
    <property type="protein sequence ID" value="SPBC16H5.07c.1:pep"/>
    <property type="gene ID" value="SPBC16H5.07c"/>
</dbReference>
<dbReference type="GeneID" id="2540072"/>
<dbReference type="KEGG" id="spo:2540072"/>
<dbReference type="PomBase" id="SPBC16H5.07c">
    <property type="gene designation" value="ppa2"/>
</dbReference>
<dbReference type="VEuPathDB" id="FungiDB:SPBC16H5.07c"/>
<dbReference type="eggNOG" id="KOG0371">
    <property type="taxonomic scope" value="Eukaryota"/>
</dbReference>
<dbReference type="HOGENOM" id="CLU_004962_8_1_1"/>
<dbReference type="InParanoid" id="P23636"/>
<dbReference type="OMA" id="MDDKTFT"/>
<dbReference type="PhylomeDB" id="P23636"/>
<dbReference type="Reactome" id="R-SPO-198753">
    <property type="pathway name" value="ERK/MAPK targets"/>
</dbReference>
<dbReference type="Reactome" id="R-SPO-202670">
    <property type="pathway name" value="ERKs are inactivated"/>
</dbReference>
<dbReference type="Reactome" id="R-SPO-389513">
    <property type="pathway name" value="Co-inhibition by CTLA4"/>
</dbReference>
<dbReference type="Reactome" id="R-SPO-6811558">
    <property type="pathway name" value="PI5P, PP2A and IER3 Regulate PI3K/AKT Signaling"/>
</dbReference>
<dbReference type="Reactome" id="R-SPO-69273">
    <property type="pathway name" value="Cyclin A/B1/B2 associated events during G2/M transition"/>
</dbReference>
<dbReference type="Reactome" id="R-SPO-975957">
    <property type="pathway name" value="Nonsense Mediated Decay (NMD) enhanced by the Exon Junction Complex (EJC)"/>
</dbReference>
<dbReference type="PRO" id="PR:P23636"/>
<dbReference type="Proteomes" id="UP000002485">
    <property type="component" value="Chromosome II"/>
</dbReference>
<dbReference type="GO" id="GO:0000775">
    <property type="term" value="C:chromosome, centromeric region"/>
    <property type="evidence" value="ECO:0000314"/>
    <property type="project" value="PomBase"/>
</dbReference>
<dbReference type="GO" id="GO:0005737">
    <property type="term" value="C:cytoplasm"/>
    <property type="evidence" value="ECO:0000314"/>
    <property type="project" value="PomBase"/>
</dbReference>
<dbReference type="GO" id="GO:0005829">
    <property type="term" value="C:cytosol"/>
    <property type="evidence" value="ECO:0007005"/>
    <property type="project" value="PomBase"/>
</dbReference>
<dbReference type="GO" id="GO:0005634">
    <property type="term" value="C:nucleus"/>
    <property type="evidence" value="ECO:0007005"/>
    <property type="project" value="PomBase"/>
</dbReference>
<dbReference type="GO" id="GO:0000159">
    <property type="term" value="C:protein phosphatase type 2A complex"/>
    <property type="evidence" value="ECO:0000314"/>
    <property type="project" value="PomBase"/>
</dbReference>
<dbReference type="GO" id="GO:0046872">
    <property type="term" value="F:metal ion binding"/>
    <property type="evidence" value="ECO:0007669"/>
    <property type="project" value="UniProtKB-KW"/>
</dbReference>
<dbReference type="GO" id="GO:0004721">
    <property type="term" value="F:phosphoprotein phosphatase activity"/>
    <property type="evidence" value="ECO:0000315"/>
    <property type="project" value="PomBase"/>
</dbReference>
<dbReference type="GO" id="GO:0004722">
    <property type="term" value="F:protein serine/threonine phosphatase activity"/>
    <property type="evidence" value="ECO:0000315"/>
    <property type="project" value="PomBase"/>
</dbReference>
<dbReference type="GO" id="GO:0051301">
    <property type="term" value="P:cell division"/>
    <property type="evidence" value="ECO:0007669"/>
    <property type="project" value="UniProtKB-KW"/>
</dbReference>
<dbReference type="GO" id="GO:1990813">
    <property type="term" value="P:meiotic centromeric cohesion protection in anaphase I"/>
    <property type="evidence" value="ECO:0000315"/>
    <property type="project" value="PomBase"/>
</dbReference>
<dbReference type="GO" id="GO:0000278">
    <property type="term" value="P:mitotic cell cycle"/>
    <property type="evidence" value="ECO:0000318"/>
    <property type="project" value="GO_Central"/>
</dbReference>
<dbReference type="GO" id="GO:0010972">
    <property type="term" value="P:negative regulation of G2/M transition of mitotic cell cycle"/>
    <property type="evidence" value="ECO:0000315"/>
    <property type="project" value="PomBase"/>
</dbReference>
<dbReference type="GO" id="GO:0010515">
    <property type="term" value="P:negative regulation of induction of conjugation with cellular fusion"/>
    <property type="evidence" value="ECO:0000315"/>
    <property type="project" value="PomBase"/>
</dbReference>
<dbReference type="GO" id="GO:0031029">
    <property type="term" value="P:regulation of septation initiation signaling"/>
    <property type="evidence" value="ECO:0000269"/>
    <property type="project" value="PomBase"/>
</dbReference>
<dbReference type="CDD" id="cd07415">
    <property type="entry name" value="MPP_PP2A_PP4_PP6"/>
    <property type="match status" value="1"/>
</dbReference>
<dbReference type="FunFam" id="3.60.21.10:FF:000003">
    <property type="entry name" value="Serine/threonine-protein phosphatase"/>
    <property type="match status" value="1"/>
</dbReference>
<dbReference type="Gene3D" id="3.60.21.10">
    <property type="match status" value="1"/>
</dbReference>
<dbReference type="InterPro" id="IPR004843">
    <property type="entry name" value="Calcineurin-like_PHP_ApaH"/>
</dbReference>
<dbReference type="InterPro" id="IPR029052">
    <property type="entry name" value="Metallo-depent_PP-like"/>
</dbReference>
<dbReference type="InterPro" id="IPR047129">
    <property type="entry name" value="PPA2-like"/>
</dbReference>
<dbReference type="InterPro" id="IPR006186">
    <property type="entry name" value="Ser/Thr-sp_prot-phosphatase"/>
</dbReference>
<dbReference type="PANTHER" id="PTHR45619">
    <property type="entry name" value="SERINE/THREONINE-PROTEIN PHOSPHATASE PP2A-RELATED"/>
    <property type="match status" value="1"/>
</dbReference>
<dbReference type="Pfam" id="PF00149">
    <property type="entry name" value="Metallophos"/>
    <property type="match status" value="1"/>
</dbReference>
<dbReference type="PRINTS" id="PR00114">
    <property type="entry name" value="STPHPHTASE"/>
</dbReference>
<dbReference type="SMART" id="SM00156">
    <property type="entry name" value="PP2Ac"/>
    <property type="match status" value="1"/>
</dbReference>
<dbReference type="SUPFAM" id="SSF56300">
    <property type="entry name" value="Metallo-dependent phosphatases"/>
    <property type="match status" value="1"/>
</dbReference>
<dbReference type="PROSITE" id="PS00125">
    <property type="entry name" value="SER_THR_PHOSPHATASE"/>
    <property type="match status" value="1"/>
</dbReference>